<feature type="chain" id="PRO_0000390522" description="Pseudouridine-5'-phosphate glycosidase">
    <location>
        <begin position="1"/>
        <end position="302"/>
    </location>
</feature>
<feature type="active site" description="Proton donor" evidence="1">
    <location>
        <position position="25"/>
    </location>
</feature>
<feature type="active site" description="Nucleophile" evidence="1">
    <location>
        <position position="159"/>
    </location>
</feature>
<feature type="binding site" evidence="1">
    <location>
        <position position="86"/>
    </location>
    <ligand>
        <name>substrate</name>
    </ligand>
</feature>
<feature type="binding site" evidence="1">
    <location>
        <position position="106"/>
    </location>
    <ligand>
        <name>substrate</name>
    </ligand>
</feature>
<feature type="binding site" evidence="1">
    <location>
        <position position="138"/>
    </location>
    <ligand>
        <name>Mn(2+)</name>
        <dbReference type="ChEBI" id="CHEBI:29035"/>
    </ligand>
</feature>
<feature type="binding site" evidence="1">
    <location>
        <begin position="140"/>
        <end position="142"/>
    </location>
    <ligand>
        <name>substrate</name>
    </ligand>
</feature>
<organism>
    <name type="scientific">Glaesserella parasuis serovar 5 (strain SH0165)</name>
    <name type="common">Haemophilus parasuis</name>
    <dbReference type="NCBI Taxonomy" id="557723"/>
    <lineage>
        <taxon>Bacteria</taxon>
        <taxon>Pseudomonadati</taxon>
        <taxon>Pseudomonadota</taxon>
        <taxon>Gammaproteobacteria</taxon>
        <taxon>Pasteurellales</taxon>
        <taxon>Pasteurellaceae</taxon>
        <taxon>Glaesserella</taxon>
    </lineage>
</organism>
<evidence type="ECO:0000255" key="1">
    <source>
        <dbReference type="HAMAP-Rule" id="MF_01876"/>
    </source>
</evidence>
<protein>
    <recommendedName>
        <fullName evidence="1">Pseudouridine-5'-phosphate glycosidase</fullName>
        <shortName evidence="1">PsiMP glycosidase</shortName>
        <ecNumber evidence="1">4.2.1.70</ecNumber>
    </recommendedName>
</protein>
<accession>B8F668</accession>
<reference key="1">
    <citation type="journal article" date="2009" name="J. Bacteriol.">
        <title>Complete genome sequence of Haemophilus parasuis SH0165.</title>
        <authorList>
            <person name="Yue M."/>
            <person name="Yang F."/>
            <person name="Yang J."/>
            <person name="Bei W."/>
            <person name="Cai X."/>
            <person name="Chen L."/>
            <person name="Dong J."/>
            <person name="Zhou R."/>
            <person name="Jin M."/>
            <person name="Jin Q."/>
            <person name="Chen H."/>
        </authorList>
    </citation>
    <scope>NUCLEOTIDE SEQUENCE [LARGE SCALE GENOMIC DNA]</scope>
    <source>
        <strain>SH0165</strain>
    </source>
</reference>
<gene>
    <name evidence="1" type="primary">psuG</name>
    <name type="synonym">idgA</name>
    <name type="ordered locus">HAPS_1217</name>
</gene>
<name>PSUG_GLAP5</name>
<sequence>MNNYLILSDEVQRGMAQGLPIVALESTIISHGMPYPQNVAMAREVEQIIRDNGAVPATIAIIDGKIRIGLSDDELELFGSSKGIAKVSRRDLPQIIASKKLGATTVASTMICAHLAGIKFFVTGGLGGVHKGWETTLDISADLDELAQTSVTVICAGAKSILDLDATLEYLETKGVPVVGYKTKNLPAFFTRDSGLPLALSCEELTEIAEMIKVKWQLGLEGGVVVANPIPQEDELAPSYINGIIDTAVKEAEEKGIIGKDITPFLLGKIVEMTEGKSLEANIKLVKNNAKVGARLAVEFFK</sequence>
<proteinExistence type="inferred from homology"/>
<comment type="function">
    <text evidence="1">Catalyzes the reversible cleavage of pseudouridine 5'-phosphate (PsiMP) to ribose 5-phosphate and uracil. Functions biologically in the cleavage direction, as part of a pseudouridine degradation pathway.</text>
</comment>
<comment type="catalytic activity">
    <reaction evidence="1">
        <text>D-ribose 5-phosphate + uracil = psi-UMP + H2O</text>
        <dbReference type="Rhea" id="RHEA:18337"/>
        <dbReference type="ChEBI" id="CHEBI:15377"/>
        <dbReference type="ChEBI" id="CHEBI:17568"/>
        <dbReference type="ChEBI" id="CHEBI:58380"/>
        <dbReference type="ChEBI" id="CHEBI:78346"/>
        <dbReference type="EC" id="4.2.1.70"/>
    </reaction>
</comment>
<comment type="cofactor">
    <cofactor evidence="1">
        <name>Mn(2+)</name>
        <dbReference type="ChEBI" id="CHEBI:29035"/>
    </cofactor>
    <text evidence="1">Binds 1 Mn(2+) ion per subunit.</text>
</comment>
<comment type="subunit">
    <text evidence="1">Homotrimer.</text>
</comment>
<comment type="similarity">
    <text evidence="1">Belongs to the pseudouridine-5'-phosphate glycosidase family.</text>
</comment>
<dbReference type="EC" id="4.2.1.70" evidence="1"/>
<dbReference type="EMBL" id="CP001321">
    <property type="protein sequence ID" value="ACL32820.1"/>
    <property type="molecule type" value="Genomic_DNA"/>
</dbReference>
<dbReference type="RefSeq" id="WP_015939678.1">
    <property type="nucleotide sequence ID" value="NC_011852.1"/>
</dbReference>
<dbReference type="SMR" id="B8F668"/>
<dbReference type="STRING" id="557723.HAPS_1217"/>
<dbReference type="KEGG" id="hap:HAPS_1217"/>
<dbReference type="HOGENOM" id="CLU_012201_0_1_6"/>
<dbReference type="Proteomes" id="UP000006743">
    <property type="component" value="Chromosome"/>
</dbReference>
<dbReference type="GO" id="GO:0005737">
    <property type="term" value="C:cytoplasm"/>
    <property type="evidence" value="ECO:0007669"/>
    <property type="project" value="TreeGrafter"/>
</dbReference>
<dbReference type="GO" id="GO:0016798">
    <property type="term" value="F:hydrolase activity, acting on glycosyl bonds"/>
    <property type="evidence" value="ECO:0007669"/>
    <property type="project" value="UniProtKB-KW"/>
</dbReference>
<dbReference type="GO" id="GO:0046872">
    <property type="term" value="F:metal ion binding"/>
    <property type="evidence" value="ECO:0007669"/>
    <property type="project" value="UniProtKB-KW"/>
</dbReference>
<dbReference type="GO" id="GO:0004730">
    <property type="term" value="F:pseudouridylate synthase activity"/>
    <property type="evidence" value="ECO:0007669"/>
    <property type="project" value="UniProtKB-UniRule"/>
</dbReference>
<dbReference type="GO" id="GO:0046113">
    <property type="term" value="P:nucleobase catabolic process"/>
    <property type="evidence" value="ECO:0007669"/>
    <property type="project" value="UniProtKB-UniRule"/>
</dbReference>
<dbReference type="Gene3D" id="3.40.1790.10">
    <property type="entry name" value="Indigoidine synthase domain"/>
    <property type="match status" value="1"/>
</dbReference>
<dbReference type="HAMAP" id="MF_01876">
    <property type="entry name" value="PsiMP_glycosidase"/>
    <property type="match status" value="1"/>
</dbReference>
<dbReference type="InterPro" id="IPR022830">
    <property type="entry name" value="Indigdn_synthA-like"/>
</dbReference>
<dbReference type="InterPro" id="IPR007342">
    <property type="entry name" value="PsuG"/>
</dbReference>
<dbReference type="PANTHER" id="PTHR42909:SF1">
    <property type="entry name" value="CARBOHYDRATE KINASE PFKB DOMAIN-CONTAINING PROTEIN"/>
    <property type="match status" value="1"/>
</dbReference>
<dbReference type="PANTHER" id="PTHR42909">
    <property type="entry name" value="ZGC:136858"/>
    <property type="match status" value="1"/>
</dbReference>
<dbReference type="Pfam" id="PF04227">
    <property type="entry name" value="Indigoidine_A"/>
    <property type="match status" value="1"/>
</dbReference>
<dbReference type="SUPFAM" id="SSF110581">
    <property type="entry name" value="Indigoidine synthase A-like"/>
    <property type="match status" value="1"/>
</dbReference>
<keyword id="KW-0326">Glycosidase</keyword>
<keyword id="KW-0378">Hydrolase</keyword>
<keyword id="KW-0456">Lyase</keyword>
<keyword id="KW-0464">Manganese</keyword>
<keyword id="KW-0479">Metal-binding</keyword>
<keyword id="KW-1185">Reference proteome</keyword>